<comment type="function">
    <text evidence="1">Catalyzes the synthesis of GMP from XMP.</text>
</comment>
<comment type="catalytic activity">
    <reaction evidence="1">
        <text>XMP + L-glutamine + ATP + H2O = GMP + L-glutamate + AMP + diphosphate + 2 H(+)</text>
        <dbReference type="Rhea" id="RHEA:11680"/>
        <dbReference type="ChEBI" id="CHEBI:15377"/>
        <dbReference type="ChEBI" id="CHEBI:15378"/>
        <dbReference type="ChEBI" id="CHEBI:29985"/>
        <dbReference type="ChEBI" id="CHEBI:30616"/>
        <dbReference type="ChEBI" id="CHEBI:33019"/>
        <dbReference type="ChEBI" id="CHEBI:57464"/>
        <dbReference type="ChEBI" id="CHEBI:58115"/>
        <dbReference type="ChEBI" id="CHEBI:58359"/>
        <dbReference type="ChEBI" id="CHEBI:456215"/>
        <dbReference type="EC" id="6.3.5.2"/>
    </reaction>
</comment>
<comment type="pathway">
    <text evidence="1">Purine metabolism; GMP biosynthesis; GMP from XMP (L-Gln route): step 1/1.</text>
</comment>
<comment type="subunit">
    <text evidence="1">Homodimer.</text>
</comment>
<reference key="1">
    <citation type="journal article" date="2004" name="Nucleic Acids Res.">
        <title>Whole genome comparisons of serotype 4b and 1/2a strains of the food-borne pathogen Listeria monocytogenes reveal new insights into the core genome components of this species.</title>
        <authorList>
            <person name="Nelson K.E."/>
            <person name="Fouts D.E."/>
            <person name="Mongodin E.F."/>
            <person name="Ravel J."/>
            <person name="DeBoy R.T."/>
            <person name="Kolonay J.F."/>
            <person name="Rasko D.A."/>
            <person name="Angiuoli S.V."/>
            <person name="Gill S.R."/>
            <person name="Paulsen I.T."/>
            <person name="Peterson J.D."/>
            <person name="White O."/>
            <person name="Nelson W.C."/>
            <person name="Nierman W.C."/>
            <person name="Beanan M.J."/>
            <person name="Brinkac L.M."/>
            <person name="Daugherty S.C."/>
            <person name="Dodson R.J."/>
            <person name="Durkin A.S."/>
            <person name="Madupu R."/>
            <person name="Haft D.H."/>
            <person name="Selengut J."/>
            <person name="Van Aken S.E."/>
            <person name="Khouri H.M."/>
            <person name="Fedorova N."/>
            <person name="Forberger H.A."/>
            <person name="Tran B."/>
            <person name="Kathariou S."/>
            <person name="Wonderling L.D."/>
            <person name="Uhlich G.A."/>
            <person name="Bayles D.O."/>
            <person name="Luchansky J.B."/>
            <person name="Fraser C.M."/>
        </authorList>
    </citation>
    <scope>NUCLEOTIDE SEQUENCE [LARGE SCALE GENOMIC DNA]</scope>
    <source>
        <strain>F2365</strain>
    </source>
</reference>
<name>GUAA_LISMF</name>
<keyword id="KW-0067">ATP-binding</keyword>
<keyword id="KW-0315">Glutamine amidotransferase</keyword>
<keyword id="KW-0332">GMP biosynthesis</keyword>
<keyword id="KW-0436">Ligase</keyword>
<keyword id="KW-0547">Nucleotide-binding</keyword>
<keyword id="KW-0658">Purine biosynthesis</keyword>
<sequence length="514" mass="57551">MKDFTEQEKIIVLDFGSQYNQLITRRIREFGVYSELHPHTITVEEMKALNPTGIIFSGGPNSVYDEDAFRADERIFDMGIPILGICYGMQLMTTHFGGKVERAKDREYGKADIHVEKPNRLFAGLPTDQVVWMSHGDLVVEEPAGFEVTITSKSCPIAGIADEERSLYGVQFHPEVRHSVYGNELLKNFALNVCGCKGDWTMENFSEVEIAKIQEIVGDKKVLLALSGGVDSSVVGVLIHKAIGDQLTCIFVDHGLLRKGEADQVMATLQGEFNMNIIKVDAKKRFMDKLAGVSDPEQKRKIIGNEFIYVFDDEANKLDGVEFLAQGTLYTDIIESGTATAQTIKSHHNVGGLPEDMQFKLIEPLNTLFKDEVRALGTELGMPDAIVWRQPFPGPGLGIRVLGEITEEKLEIVRDSDYILREEIKNAGLEREIWQYFTALPNIRSVGVMGDGRTYDHTVVVRAVTSIDGMTADWARIPWDVLEKISVRIVNEVDHVNRVVYDITSKPPATVEWE</sequence>
<organism>
    <name type="scientific">Listeria monocytogenes serotype 4b (strain F2365)</name>
    <dbReference type="NCBI Taxonomy" id="265669"/>
    <lineage>
        <taxon>Bacteria</taxon>
        <taxon>Bacillati</taxon>
        <taxon>Bacillota</taxon>
        <taxon>Bacilli</taxon>
        <taxon>Bacillales</taxon>
        <taxon>Listeriaceae</taxon>
        <taxon>Listeria</taxon>
    </lineage>
</organism>
<evidence type="ECO:0000255" key="1">
    <source>
        <dbReference type="HAMAP-Rule" id="MF_00344"/>
    </source>
</evidence>
<gene>
    <name evidence="1" type="primary">guaA</name>
    <name type="ordered locus">LMOf2365_1110</name>
</gene>
<protein>
    <recommendedName>
        <fullName evidence="1">GMP synthase [glutamine-hydrolyzing]</fullName>
        <ecNumber evidence="1">6.3.5.2</ecNumber>
    </recommendedName>
    <alternativeName>
        <fullName evidence="1">GMP synthetase</fullName>
    </alternativeName>
    <alternativeName>
        <fullName evidence="1">Glutamine amidotransferase</fullName>
    </alternativeName>
</protein>
<proteinExistence type="inferred from homology"/>
<dbReference type="EC" id="6.3.5.2" evidence="1"/>
<dbReference type="EMBL" id="AE017262">
    <property type="protein sequence ID" value="AAT03887.1"/>
    <property type="molecule type" value="Genomic_DNA"/>
</dbReference>
<dbReference type="SMR" id="Q720X7"/>
<dbReference type="KEGG" id="lmf:LMOf2365_1110"/>
<dbReference type="HOGENOM" id="CLU_014340_0_5_9"/>
<dbReference type="UniPathway" id="UPA00189">
    <property type="reaction ID" value="UER00296"/>
</dbReference>
<dbReference type="GO" id="GO:0005829">
    <property type="term" value="C:cytosol"/>
    <property type="evidence" value="ECO:0007669"/>
    <property type="project" value="TreeGrafter"/>
</dbReference>
<dbReference type="GO" id="GO:0005524">
    <property type="term" value="F:ATP binding"/>
    <property type="evidence" value="ECO:0007669"/>
    <property type="project" value="UniProtKB-UniRule"/>
</dbReference>
<dbReference type="GO" id="GO:0003921">
    <property type="term" value="F:GMP synthase activity"/>
    <property type="evidence" value="ECO:0007669"/>
    <property type="project" value="InterPro"/>
</dbReference>
<dbReference type="CDD" id="cd01742">
    <property type="entry name" value="GATase1_GMP_Synthase"/>
    <property type="match status" value="1"/>
</dbReference>
<dbReference type="CDD" id="cd01997">
    <property type="entry name" value="GMP_synthase_C"/>
    <property type="match status" value="1"/>
</dbReference>
<dbReference type="FunFam" id="3.30.300.10:FF:000002">
    <property type="entry name" value="GMP synthase [glutamine-hydrolyzing]"/>
    <property type="match status" value="1"/>
</dbReference>
<dbReference type="FunFam" id="3.40.50.620:FF:000001">
    <property type="entry name" value="GMP synthase [glutamine-hydrolyzing]"/>
    <property type="match status" value="1"/>
</dbReference>
<dbReference type="FunFam" id="3.40.50.880:FF:000001">
    <property type="entry name" value="GMP synthase [glutamine-hydrolyzing]"/>
    <property type="match status" value="1"/>
</dbReference>
<dbReference type="Gene3D" id="3.30.300.10">
    <property type="match status" value="1"/>
</dbReference>
<dbReference type="Gene3D" id="3.40.50.880">
    <property type="match status" value="1"/>
</dbReference>
<dbReference type="Gene3D" id="3.40.50.620">
    <property type="entry name" value="HUPs"/>
    <property type="match status" value="1"/>
</dbReference>
<dbReference type="HAMAP" id="MF_00344">
    <property type="entry name" value="GMP_synthase"/>
    <property type="match status" value="1"/>
</dbReference>
<dbReference type="InterPro" id="IPR029062">
    <property type="entry name" value="Class_I_gatase-like"/>
</dbReference>
<dbReference type="InterPro" id="IPR017926">
    <property type="entry name" value="GATASE"/>
</dbReference>
<dbReference type="InterPro" id="IPR001674">
    <property type="entry name" value="GMP_synth_C"/>
</dbReference>
<dbReference type="InterPro" id="IPR004739">
    <property type="entry name" value="GMP_synth_GATase"/>
</dbReference>
<dbReference type="InterPro" id="IPR022955">
    <property type="entry name" value="GMP_synthase"/>
</dbReference>
<dbReference type="InterPro" id="IPR025777">
    <property type="entry name" value="GMPS_ATP_PPase_dom"/>
</dbReference>
<dbReference type="InterPro" id="IPR022310">
    <property type="entry name" value="NAD/GMP_synthase"/>
</dbReference>
<dbReference type="InterPro" id="IPR014729">
    <property type="entry name" value="Rossmann-like_a/b/a_fold"/>
</dbReference>
<dbReference type="NCBIfam" id="TIGR00884">
    <property type="entry name" value="guaA_Cterm"/>
    <property type="match status" value="1"/>
</dbReference>
<dbReference type="NCBIfam" id="TIGR00888">
    <property type="entry name" value="guaA_Nterm"/>
    <property type="match status" value="1"/>
</dbReference>
<dbReference type="NCBIfam" id="NF000848">
    <property type="entry name" value="PRK00074.1"/>
    <property type="match status" value="1"/>
</dbReference>
<dbReference type="PANTHER" id="PTHR11922:SF2">
    <property type="entry name" value="GMP SYNTHASE [GLUTAMINE-HYDROLYZING]"/>
    <property type="match status" value="1"/>
</dbReference>
<dbReference type="PANTHER" id="PTHR11922">
    <property type="entry name" value="GMP SYNTHASE-RELATED"/>
    <property type="match status" value="1"/>
</dbReference>
<dbReference type="Pfam" id="PF00117">
    <property type="entry name" value="GATase"/>
    <property type="match status" value="1"/>
</dbReference>
<dbReference type="Pfam" id="PF00958">
    <property type="entry name" value="GMP_synt_C"/>
    <property type="match status" value="1"/>
</dbReference>
<dbReference type="Pfam" id="PF02540">
    <property type="entry name" value="NAD_synthase"/>
    <property type="match status" value="1"/>
</dbReference>
<dbReference type="PRINTS" id="PR00097">
    <property type="entry name" value="ANTSNTHASEII"/>
</dbReference>
<dbReference type="PRINTS" id="PR00099">
    <property type="entry name" value="CPSGATASE"/>
</dbReference>
<dbReference type="PRINTS" id="PR00096">
    <property type="entry name" value="GATASE"/>
</dbReference>
<dbReference type="SUPFAM" id="SSF52402">
    <property type="entry name" value="Adenine nucleotide alpha hydrolases-like"/>
    <property type="match status" value="1"/>
</dbReference>
<dbReference type="SUPFAM" id="SSF52317">
    <property type="entry name" value="Class I glutamine amidotransferase-like"/>
    <property type="match status" value="1"/>
</dbReference>
<dbReference type="SUPFAM" id="SSF54810">
    <property type="entry name" value="GMP synthetase C-terminal dimerisation domain"/>
    <property type="match status" value="1"/>
</dbReference>
<dbReference type="PROSITE" id="PS51273">
    <property type="entry name" value="GATASE_TYPE_1"/>
    <property type="match status" value="1"/>
</dbReference>
<dbReference type="PROSITE" id="PS51553">
    <property type="entry name" value="GMPS_ATP_PPASE"/>
    <property type="match status" value="1"/>
</dbReference>
<feature type="chain" id="PRO_0000140144" description="GMP synthase [glutamine-hydrolyzing]">
    <location>
        <begin position="1"/>
        <end position="514"/>
    </location>
</feature>
<feature type="domain" description="Glutamine amidotransferase type-1" evidence="1">
    <location>
        <begin position="9"/>
        <end position="199"/>
    </location>
</feature>
<feature type="domain" description="GMPS ATP-PPase" evidence="1">
    <location>
        <begin position="200"/>
        <end position="389"/>
    </location>
</feature>
<feature type="active site" description="Nucleophile" evidence="1">
    <location>
        <position position="86"/>
    </location>
</feature>
<feature type="active site" evidence="1">
    <location>
        <position position="173"/>
    </location>
</feature>
<feature type="active site" evidence="1">
    <location>
        <position position="175"/>
    </location>
</feature>
<feature type="binding site" evidence="1">
    <location>
        <begin position="227"/>
        <end position="233"/>
    </location>
    <ligand>
        <name>ATP</name>
        <dbReference type="ChEBI" id="CHEBI:30616"/>
    </ligand>
</feature>
<accession>Q720X7</accession>